<evidence type="ECO:0000250" key="1">
    <source>
        <dbReference type="UniProtKB" id="Q02153"/>
    </source>
</evidence>
<evidence type="ECO:0000255" key="2">
    <source>
        <dbReference type="PROSITE-ProRule" id="PRU00099"/>
    </source>
</evidence>
<evidence type="ECO:0000269" key="3">
    <source>
    </source>
</evidence>
<evidence type="ECO:0000269" key="4">
    <source>
    </source>
</evidence>
<name>GCYB1_BOVIN</name>
<dbReference type="EC" id="4.6.1.2" evidence="3"/>
<dbReference type="EMBL" id="Y00770">
    <property type="protein sequence ID" value="CAA68739.1"/>
    <property type="molecule type" value="mRNA"/>
</dbReference>
<dbReference type="EMBL" id="BC133308">
    <property type="protein sequence ID" value="AAI33309.1"/>
    <property type="molecule type" value="mRNA"/>
</dbReference>
<dbReference type="PIR" id="S01653">
    <property type="entry name" value="OYBO70"/>
</dbReference>
<dbReference type="RefSeq" id="NP_777066.1">
    <property type="nucleotide sequence ID" value="NM_174641.1"/>
</dbReference>
<dbReference type="SMR" id="P16068"/>
<dbReference type="FunCoup" id="P16068">
    <property type="interactions" value="1432"/>
</dbReference>
<dbReference type="STRING" id="9913.ENSBTAP00000005009"/>
<dbReference type="PaxDb" id="9913-ENSBTAP00000055570"/>
<dbReference type="GeneID" id="282433"/>
<dbReference type="KEGG" id="bta:282433"/>
<dbReference type="CTD" id="2983"/>
<dbReference type="VEuPathDB" id="HostDB:ENSBTAG00000003840"/>
<dbReference type="eggNOG" id="KOG4171">
    <property type="taxonomic scope" value="Eukaryota"/>
</dbReference>
<dbReference type="HOGENOM" id="CLU_011614_4_0_1"/>
<dbReference type="InParanoid" id="P16068"/>
<dbReference type="OMA" id="SHARCIG"/>
<dbReference type="OrthoDB" id="6127067at2759"/>
<dbReference type="BRENDA" id="4.6.1.2">
    <property type="organism ID" value="908"/>
</dbReference>
<dbReference type="Reactome" id="R-BTA-445355">
    <property type="pathway name" value="Smooth Muscle Contraction"/>
</dbReference>
<dbReference type="Proteomes" id="UP000009136">
    <property type="component" value="Chromosome 17"/>
</dbReference>
<dbReference type="Bgee" id="ENSBTAG00000003840">
    <property type="expression patterns" value="Expressed in occipital lobe and 108 other cell types or tissues"/>
</dbReference>
<dbReference type="GO" id="GO:0005737">
    <property type="term" value="C:cytoplasm"/>
    <property type="evidence" value="ECO:0000314"/>
    <property type="project" value="UniProtKB"/>
</dbReference>
<dbReference type="GO" id="GO:0008074">
    <property type="term" value="C:guanylate cyclase complex, soluble"/>
    <property type="evidence" value="ECO:0000314"/>
    <property type="project" value="UniProtKB"/>
</dbReference>
<dbReference type="GO" id="GO:0005525">
    <property type="term" value="F:GTP binding"/>
    <property type="evidence" value="ECO:0007669"/>
    <property type="project" value="UniProtKB-KW"/>
</dbReference>
<dbReference type="GO" id="GO:0004383">
    <property type="term" value="F:guanylate cyclase activity"/>
    <property type="evidence" value="ECO:0000314"/>
    <property type="project" value="UniProtKB"/>
</dbReference>
<dbReference type="GO" id="GO:0020037">
    <property type="term" value="F:heme binding"/>
    <property type="evidence" value="ECO:0000314"/>
    <property type="project" value="UniProtKB"/>
</dbReference>
<dbReference type="GO" id="GO:0046872">
    <property type="term" value="F:metal ion binding"/>
    <property type="evidence" value="ECO:0007669"/>
    <property type="project" value="UniProtKB-KW"/>
</dbReference>
<dbReference type="GO" id="GO:0071732">
    <property type="term" value="P:cellular response to nitric oxide"/>
    <property type="evidence" value="ECO:0000314"/>
    <property type="project" value="UniProtKB"/>
</dbReference>
<dbReference type="GO" id="GO:0006182">
    <property type="term" value="P:cGMP biosynthetic process"/>
    <property type="evidence" value="ECO:0000314"/>
    <property type="project" value="UniProtKB"/>
</dbReference>
<dbReference type="GO" id="GO:0019934">
    <property type="term" value="P:cGMP-mediated signaling"/>
    <property type="evidence" value="ECO:0000318"/>
    <property type="project" value="GO_Central"/>
</dbReference>
<dbReference type="GO" id="GO:0038060">
    <property type="term" value="P:nitric oxide-cGMP-mediated signaling"/>
    <property type="evidence" value="ECO:0000314"/>
    <property type="project" value="UniProtKB"/>
</dbReference>
<dbReference type="GO" id="GO:0070482">
    <property type="term" value="P:response to oxygen levels"/>
    <property type="evidence" value="ECO:0000318"/>
    <property type="project" value="GO_Central"/>
</dbReference>
<dbReference type="CDD" id="cd07302">
    <property type="entry name" value="CHD"/>
    <property type="match status" value="1"/>
</dbReference>
<dbReference type="FunFam" id="3.30.70.1230:FF:000005">
    <property type="entry name" value="Guanylate cyclase soluble subunit beta-1"/>
    <property type="match status" value="1"/>
</dbReference>
<dbReference type="FunFam" id="3.90.1520.10:FF:000001">
    <property type="entry name" value="Guanylate cyclase soluble subunit beta-1"/>
    <property type="match status" value="1"/>
</dbReference>
<dbReference type="FunFam" id="3.30.450.260:FF:000001">
    <property type="entry name" value="guanylate cyclase soluble subunit beta-1 isoform X1"/>
    <property type="match status" value="1"/>
</dbReference>
<dbReference type="Gene3D" id="6.10.250.780">
    <property type="match status" value="1"/>
</dbReference>
<dbReference type="Gene3D" id="3.90.1520.10">
    <property type="entry name" value="H-NOX domain"/>
    <property type="match status" value="1"/>
</dbReference>
<dbReference type="Gene3D" id="3.30.450.260">
    <property type="entry name" value="Haem NO binding associated domain"/>
    <property type="match status" value="1"/>
</dbReference>
<dbReference type="Gene3D" id="3.30.70.1230">
    <property type="entry name" value="Nucleotide cyclase"/>
    <property type="match status" value="1"/>
</dbReference>
<dbReference type="InterPro" id="IPR001054">
    <property type="entry name" value="A/G_cyclase"/>
</dbReference>
<dbReference type="InterPro" id="IPR018297">
    <property type="entry name" value="A/G_cyclase_CS"/>
</dbReference>
<dbReference type="InterPro" id="IPR038158">
    <property type="entry name" value="H-NOX_domain_sf"/>
</dbReference>
<dbReference type="InterPro" id="IPR011644">
    <property type="entry name" value="Heme_NO-bd"/>
</dbReference>
<dbReference type="InterPro" id="IPR011645">
    <property type="entry name" value="HNOB_dom_associated"/>
</dbReference>
<dbReference type="InterPro" id="IPR042463">
    <property type="entry name" value="HNOB_dom_associated_sf"/>
</dbReference>
<dbReference type="InterPro" id="IPR024096">
    <property type="entry name" value="NO_sig/Golgi_transp_ligand-bd"/>
</dbReference>
<dbReference type="InterPro" id="IPR029787">
    <property type="entry name" value="Nucleotide_cyclase"/>
</dbReference>
<dbReference type="PANTHER" id="PTHR45655:SF2">
    <property type="entry name" value="GUANYLATE CYCLASE SOLUBLE SUBUNIT BETA-1"/>
    <property type="match status" value="1"/>
</dbReference>
<dbReference type="PANTHER" id="PTHR45655">
    <property type="entry name" value="GUANYLATE CYCLASE SOLUBLE SUBUNIT BETA-2"/>
    <property type="match status" value="1"/>
</dbReference>
<dbReference type="Pfam" id="PF00211">
    <property type="entry name" value="Guanylate_cyc"/>
    <property type="match status" value="1"/>
</dbReference>
<dbReference type="Pfam" id="PF07700">
    <property type="entry name" value="HNOB"/>
    <property type="match status" value="1"/>
</dbReference>
<dbReference type="Pfam" id="PF07701">
    <property type="entry name" value="HNOBA"/>
    <property type="match status" value="1"/>
</dbReference>
<dbReference type="SMART" id="SM00044">
    <property type="entry name" value="CYCc"/>
    <property type="match status" value="1"/>
</dbReference>
<dbReference type="SUPFAM" id="SSF111126">
    <property type="entry name" value="Ligand-binding domain in the NO signalling and Golgi transport"/>
    <property type="match status" value="1"/>
</dbReference>
<dbReference type="SUPFAM" id="SSF55073">
    <property type="entry name" value="Nucleotide cyclase"/>
    <property type="match status" value="1"/>
</dbReference>
<dbReference type="PROSITE" id="PS00452">
    <property type="entry name" value="GUANYLATE_CYCLASE_1"/>
    <property type="match status" value="1"/>
</dbReference>
<dbReference type="PROSITE" id="PS50125">
    <property type="entry name" value="GUANYLATE_CYCLASE_2"/>
    <property type="match status" value="1"/>
</dbReference>
<accession>P16068</accession>
<accession>A2VDM4</accession>
<gene>
    <name type="primary">GUCY1B1</name>
    <name type="synonym">GUC1B3</name>
    <name type="synonym">GUCY1B3</name>
</gene>
<feature type="chain" id="PRO_0000074115" description="Guanylate cyclase soluble subunit beta-1">
    <location>
        <begin position="1"/>
        <end position="619"/>
    </location>
</feature>
<feature type="domain" description="Guanylate cyclase" evidence="2">
    <location>
        <begin position="421"/>
        <end position="554"/>
    </location>
</feature>
<feature type="binding site" description="proximal binding residue" evidence="3 4">
    <location>
        <position position="105"/>
    </location>
    <ligand>
        <name>heme</name>
        <dbReference type="ChEBI" id="CHEBI:30413"/>
    </ligand>
    <ligandPart>
        <name>Fe</name>
        <dbReference type="ChEBI" id="CHEBI:18248"/>
    </ligandPart>
</feature>
<feature type="mutagenesis site" description="Abolishes heme binding." evidence="4">
    <original>H</original>
    <variation>A</variation>
    <variation>G</variation>
    <location>
        <position position="105"/>
    </location>
</feature>
<feature type="mutagenesis site" description="Does not affect basal levels of enzyme activity, but abolishes stimulation by nitric oxide." evidence="3">
    <original>H</original>
    <variation>F</variation>
    <location>
        <position position="105"/>
    </location>
</feature>
<sequence>MYGFVNHALELLVIRNYGPEVWEDIKKEAQLDEEGQFLVRIIYDDSKTYDLVAAASKVLNLNAGEILQMFGKMFFVFCQESGYDTILRVLGSNVREFLQNLDALHDHLATIYPGMRAPSFRCTDADKGKGLILHYYSEREGLQDIVIGIIKTVAQQIHGTEIDMKVIQQRNEECDHTQFLIEEKESKEEDFYEDLDRFEENGTQESRISPYTFCKAFPFHIIFDRDLVVTQCGNAIYRVLPQLQPGNCSLLSVFSLVRPHIDISFHGILSHINTVFVLRSKEGLLDVEKSECEDELTGTEISCLRLKGQMIYLPEADSILFLCSPSVMNLDDLTRRGLYLSDIPLHDATRDLVLLGEQFREEYKLTQELEILTDRLQLTLRALEDEKKKTDTLLYSVLPPSVANELRHKRPVPAKRYDNVTILFSGIVGFNAFCSKHASGEGAMKIVNLLNDLYTRFDTLTDSRKNPFVYKVETVGDKYMTVSGLPEPCIHHARSICHLALDMMEIAGQVQVDGESVQITIGIHTGEVVTGVIGQRMPRYCLFGNTVNLTSRTETTGEKGKINVSEYTYRCLMTPENSDPQFHLEHRGPVSMKGKKEPMQVWFLSRKNTGTEETEQDEN</sequence>
<comment type="function">
    <text evidence="3">Mediates responses to nitric oxide (NO) by catalyzing the biosynthesis of the signaling molecule cGMP.</text>
</comment>
<comment type="catalytic activity">
    <reaction evidence="3">
        <text>GTP = 3',5'-cyclic GMP + diphosphate</text>
        <dbReference type="Rhea" id="RHEA:13665"/>
        <dbReference type="ChEBI" id="CHEBI:33019"/>
        <dbReference type="ChEBI" id="CHEBI:37565"/>
        <dbReference type="ChEBI" id="CHEBI:57746"/>
        <dbReference type="EC" id="4.6.1.2"/>
    </reaction>
</comment>
<comment type="cofactor">
    <cofactor evidence="3 4">
        <name>heme</name>
        <dbReference type="ChEBI" id="CHEBI:30413"/>
    </cofactor>
    <text evidence="3 4">Binds 1 or 2 heme groups per heterodimer. Heme is required for responding to nitric oxide, but not for catalytic activity.</text>
</comment>
<comment type="activity regulation">
    <text evidence="3">Activated by nitric oxide in the presence of magnesium or manganese ions, binding of NO to the heme iron increases catalytic activity up to 400 folds.</text>
</comment>
<comment type="subunit">
    <text evidence="1 3 4">The active enzyme is formed by a heterodimer of an alpha and a beta subunit (PubMed:7908439, PubMed:9521770). Heterodimer with GUCY1A1. Can also form inactive homodimers in vitro.</text>
</comment>
<comment type="subcellular location">
    <subcellularLocation>
        <location evidence="3">Cytoplasm</location>
    </subcellularLocation>
</comment>
<comment type="tissue specificity">
    <text>Lung and brain.</text>
</comment>
<comment type="miscellaneous">
    <text>There are two types of guanylate cyclases: soluble forms and membrane-associated receptor forms.</text>
</comment>
<comment type="similarity">
    <text evidence="2">Belongs to the adenylyl cyclase class-4/guanylyl cyclase family.</text>
</comment>
<reference key="1">
    <citation type="journal article" date="1988" name="FEBS Lett.">
        <title>The primary structure of the 70 kDa subunit of bovine soluble guanylate cyclase.</title>
        <authorList>
            <person name="Koesling D."/>
            <person name="Herz J."/>
            <person name="Gausepohl H."/>
            <person name="Niroomand F."/>
            <person name="Hinsch K.-D."/>
            <person name="Muelsch A."/>
            <person name="Boehme E."/>
            <person name="Schultz G."/>
            <person name="Frank R."/>
        </authorList>
    </citation>
    <scope>NUCLEOTIDE SEQUENCE [MRNA]</scope>
    <scope>PARTIAL PROTEIN SEQUENCE</scope>
    <source>
        <tissue>Lung</tissue>
    </source>
</reference>
<reference key="2">
    <citation type="submission" date="2007-02" db="EMBL/GenBank/DDBJ databases">
        <authorList>
            <consortium name="NIH - Mammalian Gene Collection (MGC) project"/>
        </authorList>
    </citation>
    <scope>NUCLEOTIDE SEQUENCE [LARGE SCALE MRNA]</scope>
    <source>
        <strain>Hereford</strain>
        <tissue>Brain cortex</tissue>
    </source>
</reference>
<reference key="3">
    <citation type="journal article" date="1994" name="Proc. Natl. Acad. Sci. U.S.A.">
        <title>Mutation of His-105 in the beta 1 subunit yields a nitric oxide-insensitive form of soluble guanylyl cyclase.</title>
        <authorList>
            <person name="Wedel B."/>
            <person name="Humbert P."/>
            <person name="Harteneck C."/>
            <person name="Foerster J."/>
            <person name="Malkewitz J."/>
            <person name="Bohme E."/>
            <person name="Schultz G."/>
            <person name="Koesling D."/>
        </authorList>
    </citation>
    <scope>MUTAGENESIS OF HIS-105</scope>
    <scope>CATALYTIC ACTIVITY</scope>
    <scope>SUBUNIT</scope>
    <scope>FUNCTION</scope>
    <scope>COFACTOR</scope>
    <scope>SUBCELLULAR LOCATION</scope>
    <scope>ACTIVITY REGULATION</scope>
</reference>
<reference key="4">
    <citation type="journal article" date="1998" name="Biochemistry">
        <title>Identification of histidine 105 in the beta1 subunit of soluble guanylate cyclase as the heme proximal ligand.</title>
        <authorList>
            <person name="Zhao Y."/>
            <person name="Schelvis J.P."/>
            <person name="Babcock G.T."/>
            <person name="Marletta M.A."/>
        </authorList>
    </citation>
    <scope>HEME PROXIMAL LIGAND</scope>
    <scope>MUTAGENESIS OF HIS-105</scope>
    <scope>COFACTOR</scope>
    <scope>SUBUNIT</scope>
</reference>
<reference key="5">
    <citation type="journal article" date="1997" name="Proc. Natl. Acad. Sci. U.S.A.">
        <title>Catalytic mechanism of the adenylyl and guanylyl cyclases: modeling and mutational analysis.</title>
        <authorList>
            <person name="Liu Y."/>
            <person name="Ruoho A.E."/>
            <person name="Rao V.D."/>
            <person name="Hurley J.H."/>
        </authorList>
    </citation>
    <scope>3D-STRUCTURE MODELING OF 412-572</scope>
</reference>
<protein>
    <recommendedName>
        <fullName>Guanylate cyclase soluble subunit beta-1</fullName>
        <shortName>GCS-beta-1</shortName>
        <ecNumber evidence="3">4.6.1.2</ecNumber>
    </recommendedName>
    <alternativeName>
        <fullName>Guanylate cyclase soluble subunit beta-3</fullName>
        <shortName>GCS-beta-3</shortName>
    </alternativeName>
    <alternativeName>
        <fullName>Soluble guanylate cyclase small subunit</fullName>
    </alternativeName>
</protein>
<organism>
    <name type="scientific">Bos taurus</name>
    <name type="common">Bovine</name>
    <dbReference type="NCBI Taxonomy" id="9913"/>
    <lineage>
        <taxon>Eukaryota</taxon>
        <taxon>Metazoa</taxon>
        <taxon>Chordata</taxon>
        <taxon>Craniata</taxon>
        <taxon>Vertebrata</taxon>
        <taxon>Euteleostomi</taxon>
        <taxon>Mammalia</taxon>
        <taxon>Eutheria</taxon>
        <taxon>Laurasiatheria</taxon>
        <taxon>Artiodactyla</taxon>
        <taxon>Ruminantia</taxon>
        <taxon>Pecora</taxon>
        <taxon>Bovidae</taxon>
        <taxon>Bovinae</taxon>
        <taxon>Bos</taxon>
    </lineage>
</organism>
<proteinExistence type="evidence at protein level"/>
<keyword id="KW-0141">cGMP biosynthesis</keyword>
<keyword id="KW-0963">Cytoplasm</keyword>
<keyword id="KW-0903">Direct protein sequencing</keyword>
<keyword id="KW-0342">GTP-binding</keyword>
<keyword id="KW-0349">Heme</keyword>
<keyword id="KW-0408">Iron</keyword>
<keyword id="KW-0456">Lyase</keyword>
<keyword id="KW-0479">Metal-binding</keyword>
<keyword id="KW-0547">Nucleotide-binding</keyword>
<keyword id="KW-1185">Reference proteome</keyword>